<protein>
    <recommendedName>
        <fullName evidence="9">Atlastin-1</fullName>
        <ecNumber evidence="3">3.6.5.-</ecNumber>
    </recommendedName>
    <alternativeName>
        <fullName evidence="10">Spastic paraplegia 3A homolog</fullName>
    </alternativeName>
</protein>
<dbReference type="EC" id="3.6.5.-" evidence="3"/>
<dbReference type="EMBL" id="AK046919">
    <property type="protein sequence ID" value="BAC32920.1"/>
    <property type="molecule type" value="mRNA"/>
</dbReference>
<dbReference type="EMBL" id="AK050339">
    <property type="protein sequence ID" value="BAC34198.1"/>
    <property type="molecule type" value="mRNA"/>
</dbReference>
<dbReference type="EMBL" id="BC050784">
    <property type="protein sequence ID" value="AAH50784.1"/>
    <property type="molecule type" value="mRNA"/>
</dbReference>
<dbReference type="EMBL" id="AK083918">
    <property type="protein sequence ID" value="BAC39062.1"/>
    <property type="molecule type" value="mRNA"/>
</dbReference>
<dbReference type="CCDS" id="CCDS36465.1"/>
<dbReference type="RefSeq" id="NP_848743.1">
    <property type="nucleotide sequence ID" value="NM_178628.5"/>
</dbReference>
<dbReference type="SMR" id="Q8BH66"/>
<dbReference type="BioGRID" id="216409">
    <property type="interactions" value="8"/>
</dbReference>
<dbReference type="FunCoup" id="Q8BH66">
    <property type="interactions" value="3118"/>
</dbReference>
<dbReference type="IntAct" id="Q8BH66">
    <property type="interactions" value="2"/>
</dbReference>
<dbReference type="MINT" id="Q8BH66"/>
<dbReference type="STRING" id="10090.ENSMUSP00000021466"/>
<dbReference type="GlyGen" id="Q8BH66">
    <property type="glycosylation" value="1 site, 1 O-linked glycan (1 site)"/>
</dbReference>
<dbReference type="iPTMnet" id="Q8BH66"/>
<dbReference type="PhosphoSitePlus" id="Q8BH66"/>
<dbReference type="SwissPalm" id="Q8BH66"/>
<dbReference type="jPOST" id="Q8BH66"/>
<dbReference type="PaxDb" id="10090-ENSMUSP00000021466"/>
<dbReference type="PeptideAtlas" id="Q8BH66"/>
<dbReference type="ProteomicsDB" id="265151"/>
<dbReference type="Pumba" id="Q8BH66"/>
<dbReference type="Antibodypedia" id="23673">
    <property type="antibodies" value="240 antibodies from 30 providers"/>
</dbReference>
<dbReference type="Ensembl" id="ENSMUST00000021466.10">
    <property type="protein sequence ID" value="ENSMUSP00000021466.9"/>
    <property type="gene ID" value="ENSMUSG00000021066.10"/>
</dbReference>
<dbReference type="GeneID" id="73991"/>
<dbReference type="KEGG" id="mmu:73991"/>
<dbReference type="UCSC" id="uc007nsy.2">
    <property type="organism name" value="mouse"/>
</dbReference>
<dbReference type="AGR" id="MGI:1921241"/>
<dbReference type="CTD" id="51062"/>
<dbReference type="MGI" id="MGI:1921241">
    <property type="gene designation" value="Atl1"/>
</dbReference>
<dbReference type="VEuPathDB" id="HostDB:ENSMUSG00000021066"/>
<dbReference type="eggNOG" id="KOG2037">
    <property type="taxonomic scope" value="Eukaryota"/>
</dbReference>
<dbReference type="GeneTree" id="ENSGT00940000158704"/>
<dbReference type="HOGENOM" id="CLU_021447_2_0_1"/>
<dbReference type="InParanoid" id="Q8BH66"/>
<dbReference type="OMA" id="GFIHNIW"/>
<dbReference type="OrthoDB" id="33086at9989"/>
<dbReference type="PhylomeDB" id="Q8BH66"/>
<dbReference type="TreeFam" id="TF105251"/>
<dbReference type="BioGRID-ORCS" id="73991">
    <property type="hits" value="0 hits in 76 CRISPR screens"/>
</dbReference>
<dbReference type="ChiTaRS" id="Atl1">
    <property type="organism name" value="mouse"/>
</dbReference>
<dbReference type="PRO" id="PR:Q8BH66"/>
<dbReference type="Proteomes" id="UP000000589">
    <property type="component" value="Chromosome 12"/>
</dbReference>
<dbReference type="RNAct" id="Q8BH66">
    <property type="molecule type" value="protein"/>
</dbReference>
<dbReference type="Bgee" id="ENSMUSG00000021066">
    <property type="expression patterns" value="Expressed in dorsomedial nucleus of hypothalamus and 216 other cell types or tissues"/>
</dbReference>
<dbReference type="ExpressionAtlas" id="Q8BH66">
    <property type="expression patterns" value="baseline and differential"/>
</dbReference>
<dbReference type="GO" id="GO:0030424">
    <property type="term" value="C:axon"/>
    <property type="evidence" value="ECO:0007669"/>
    <property type="project" value="UniProtKB-SubCell"/>
</dbReference>
<dbReference type="GO" id="GO:0005737">
    <property type="term" value="C:cytoplasm"/>
    <property type="evidence" value="ECO:0000314"/>
    <property type="project" value="MGI"/>
</dbReference>
<dbReference type="GO" id="GO:0005783">
    <property type="term" value="C:endoplasmic reticulum"/>
    <property type="evidence" value="ECO:0000250"/>
    <property type="project" value="UniProtKB"/>
</dbReference>
<dbReference type="GO" id="GO:0005789">
    <property type="term" value="C:endoplasmic reticulum membrane"/>
    <property type="evidence" value="ECO:0000250"/>
    <property type="project" value="UniProtKB"/>
</dbReference>
<dbReference type="GO" id="GO:0071782">
    <property type="term" value="C:endoplasmic reticulum tubular network"/>
    <property type="evidence" value="ECO:0000314"/>
    <property type="project" value="UniProtKB"/>
</dbReference>
<dbReference type="GO" id="GO:0098826">
    <property type="term" value="C:endoplasmic reticulum tubular network membrane"/>
    <property type="evidence" value="ECO:0000250"/>
    <property type="project" value="UniProtKB"/>
</dbReference>
<dbReference type="GO" id="GO:0005794">
    <property type="term" value="C:Golgi apparatus"/>
    <property type="evidence" value="ECO:0000250"/>
    <property type="project" value="UniProtKB"/>
</dbReference>
<dbReference type="GO" id="GO:1990674">
    <property type="term" value="C:Golgi cis cisterna membrane"/>
    <property type="evidence" value="ECO:0000250"/>
    <property type="project" value="UniProtKB"/>
</dbReference>
<dbReference type="GO" id="GO:0000139">
    <property type="term" value="C:Golgi membrane"/>
    <property type="evidence" value="ECO:0007669"/>
    <property type="project" value="UniProtKB-SubCell"/>
</dbReference>
<dbReference type="GO" id="GO:0005525">
    <property type="term" value="F:GTP binding"/>
    <property type="evidence" value="ECO:0000250"/>
    <property type="project" value="UniProtKB"/>
</dbReference>
<dbReference type="GO" id="GO:0140523">
    <property type="term" value="F:GTPase-dependent fusogenic activity"/>
    <property type="evidence" value="ECO:0000250"/>
    <property type="project" value="UniProtKB"/>
</dbReference>
<dbReference type="GO" id="GO:0042802">
    <property type="term" value="F:identical protein binding"/>
    <property type="evidence" value="ECO:0000250"/>
    <property type="project" value="UniProtKB"/>
</dbReference>
<dbReference type="GO" id="GO:0007409">
    <property type="term" value="P:axonogenesis"/>
    <property type="evidence" value="ECO:0000250"/>
    <property type="project" value="UniProtKB"/>
</dbReference>
<dbReference type="GO" id="GO:0016320">
    <property type="term" value="P:endoplasmic reticulum membrane fusion"/>
    <property type="evidence" value="ECO:0000250"/>
    <property type="project" value="UniProtKB"/>
</dbReference>
<dbReference type="GO" id="GO:1990809">
    <property type="term" value="P:endoplasmic reticulum tubular network membrane organization"/>
    <property type="evidence" value="ECO:0000250"/>
    <property type="project" value="UniProtKB"/>
</dbReference>
<dbReference type="CDD" id="cd01851">
    <property type="entry name" value="GBP"/>
    <property type="match status" value="1"/>
</dbReference>
<dbReference type="FunFam" id="1.20.58.420:FF:000001">
    <property type="entry name" value="Atlastin-1 isoform 1"/>
    <property type="match status" value="1"/>
</dbReference>
<dbReference type="FunFam" id="3.40.50.300:FF:000497">
    <property type="entry name" value="Atlastin-1 isoform 1"/>
    <property type="match status" value="1"/>
</dbReference>
<dbReference type="Gene3D" id="1.20.58.420">
    <property type="entry name" value="AHSP"/>
    <property type="match status" value="1"/>
</dbReference>
<dbReference type="Gene3D" id="3.40.50.300">
    <property type="entry name" value="P-loop containing nucleotide triphosphate hydrolases"/>
    <property type="match status" value="1"/>
</dbReference>
<dbReference type="InterPro" id="IPR030386">
    <property type="entry name" value="G_GB1_RHD3_dom"/>
</dbReference>
<dbReference type="InterPro" id="IPR036543">
    <property type="entry name" value="Guanylate-bd_C_sf"/>
</dbReference>
<dbReference type="InterPro" id="IPR015894">
    <property type="entry name" value="Guanylate-bd_N"/>
</dbReference>
<dbReference type="InterPro" id="IPR027417">
    <property type="entry name" value="P-loop_NTPase"/>
</dbReference>
<dbReference type="PANTHER" id="PTHR10751">
    <property type="entry name" value="GUANYLATE BINDING PROTEIN"/>
    <property type="match status" value="1"/>
</dbReference>
<dbReference type="Pfam" id="PF02263">
    <property type="entry name" value="GBP"/>
    <property type="match status" value="1"/>
</dbReference>
<dbReference type="SUPFAM" id="SSF48340">
    <property type="entry name" value="Interferon-induced guanylate-binding protein 1 (GBP1), C-terminal domain"/>
    <property type="match status" value="1"/>
</dbReference>
<dbReference type="SUPFAM" id="SSF52540">
    <property type="entry name" value="P-loop containing nucleoside triphosphate hydrolases"/>
    <property type="match status" value="1"/>
</dbReference>
<dbReference type="PROSITE" id="PS51715">
    <property type="entry name" value="G_GB1_RHD3"/>
    <property type="match status" value="1"/>
</dbReference>
<sequence>MAKSRRDRNSWGGFSEKSSDWSSEEEEPVRKAGPVQVLIVKDDHSFELDEAALNRILLSQAVRDKEVVAVSVAGAFRKGKSFLMDFMLRYMYNQESVDWVGDYNEPLTGFSWRGGSERETTGIQIWSEVFLINKLDGKKVAVLLMDTQGTFDSQSTLRDSATVFALSTMISSIQVYNLSQNVQEDDLQHLQLFTEYGRLAMEETFLKPFQSLIFLVRDWSFPYEFSYGADGGAKFLEKRLKVSGNQHEELQNVRKHIHSCFTNISCFLLPHPGLKVATNPNFDGKLKEIDDEFIKNLKILIPWLLSPERLDIKEINGNKITCRGLLEYFKAYIKIYQGEELPHPKSMLQATAEANNLAAVATAKDTYNKKMEEVCGGDKPFLAPNDLQSKHLQLKEESVKLFRGVKKMGGEEFSRRYLQQLESEIDELYIQYIKHNDSKNIFHAARTPATLFVVIFITYVIAGVTGFIGLDIIASLCNMIMGLTLITLCTWAYIRYSGEYRELGAVIDQVAAALWDQGSTNEALYKLYSAAATHRHLCHQAFPAPKSEPTQQPEKKKI</sequence>
<name>ATLA1_MOUSE</name>
<evidence type="ECO:0000250" key="1">
    <source>
        <dbReference type="UniProtKB" id="Q6DD88"/>
    </source>
</evidence>
<evidence type="ECO:0000250" key="2">
    <source>
        <dbReference type="UniProtKB" id="Q6PST4"/>
    </source>
</evidence>
<evidence type="ECO:0000250" key="3">
    <source>
        <dbReference type="UniProtKB" id="Q8WXF7"/>
    </source>
</evidence>
<evidence type="ECO:0000255" key="4"/>
<evidence type="ECO:0000255" key="5">
    <source>
        <dbReference type="PROSITE-ProRule" id="PRU01052"/>
    </source>
</evidence>
<evidence type="ECO:0000256" key="6">
    <source>
        <dbReference type="SAM" id="MobiDB-lite"/>
    </source>
</evidence>
<evidence type="ECO:0000269" key="7">
    <source>
    </source>
</evidence>
<evidence type="ECO:0000269" key="8">
    <source>
    </source>
</evidence>
<evidence type="ECO:0000303" key="9">
    <source>
    </source>
</evidence>
<evidence type="ECO:0000305" key="10">
    <source>
    </source>
</evidence>
<evidence type="ECO:0000312" key="11">
    <source>
        <dbReference type="MGI" id="MGI:1921241"/>
    </source>
</evidence>
<evidence type="ECO:0007744" key="12">
    <source>
    </source>
</evidence>
<evidence type="ECO:0007744" key="13">
    <source>
    </source>
</evidence>
<organism>
    <name type="scientific">Mus musculus</name>
    <name type="common">Mouse</name>
    <dbReference type="NCBI Taxonomy" id="10090"/>
    <lineage>
        <taxon>Eukaryota</taxon>
        <taxon>Metazoa</taxon>
        <taxon>Chordata</taxon>
        <taxon>Craniata</taxon>
        <taxon>Vertebrata</taxon>
        <taxon>Euteleostomi</taxon>
        <taxon>Mammalia</taxon>
        <taxon>Eutheria</taxon>
        <taxon>Euarchontoglires</taxon>
        <taxon>Glires</taxon>
        <taxon>Rodentia</taxon>
        <taxon>Myomorpha</taxon>
        <taxon>Muroidea</taxon>
        <taxon>Muridae</taxon>
        <taxon>Murinae</taxon>
        <taxon>Mus</taxon>
        <taxon>Mus</taxon>
    </lineage>
</organism>
<proteinExistence type="evidence at protein level"/>
<keyword id="KW-0007">Acetylation</keyword>
<keyword id="KW-0966">Cell projection</keyword>
<keyword id="KW-0175">Coiled coil</keyword>
<keyword id="KW-0256">Endoplasmic reticulum</keyword>
<keyword id="KW-0333">Golgi apparatus</keyword>
<keyword id="KW-0342">GTP-binding</keyword>
<keyword id="KW-0378">Hydrolase</keyword>
<keyword id="KW-0460">Magnesium</keyword>
<keyword id="KW-0472">Membrane</keyword>
<keyword id="KW-0479">Metal-binding</keyword>
<keyword id="KW-0547">Nucleotide-binding</keyword>
<keyword id="KW-0597">Phosphoprotein</keyword>
<keyword id="KW-1185">Reference proteome</keyword>
<keyword id="KW-0812">Transmembrane</keyword>
<keyword id="KW-1133">Transmembrane helix</keyword>
<reference key="1">
    <citation type="journal article" date="2005" name="Science">
        <title>The transcriptional landscape of the mammalian genome.</title>
        <authorList>
            <person name="Carninci P."/>
            <person name="Kasukawa T."/>
            <person name="Katayama S."/>
            <person name="Gough J."/>
            <person name="Frith M.C."/>
            <person name="Maeda N."/>
            <person name="Oyama R."/>
            <person name="Ravasi T."/>
            <person name="Lenhard B."/>
            <person name="Wells C."/>
            <person name="Kodzius R."/>
            <person name="Shimokawa K."/>
            <person name="Bajic V.B."/>
            <person name="Brenner S.E."/>
            <person name="Batalov S."/>
            <person name="Forrest A.R."/>
            <person name="Zavolan M."/>
            <person name="Davis M.J."/>
            <person name="Wilming L.G."/>
            <person name="Aidinis V."/>
            <person name="Allen J.E."/>
            <person name="Ambesi-Impiombato A."/>
            <person name="Apweiler R."/>
            <person name="Aturaliya R.N."/>
            <person name="Bailey T.L."/>
            <person name="Bansal M."/>
            <person name="Baxter L."/>
            <person name="Beisel K.W."/>
            <person name="Bersano T."/>
            <person name="Bono H."/>
            <person name="Chalk A.M."/>
            <person name="Chiu K.P."/>
            <person name="Choudhary V."/>
            <person name="Christoffels A."/>
            <person name="Clutterbuck D.R."/>
            <person name="Crowe M.L."/>
            <person name="Dalla E."/>
            <person name="Dalrymple B.P."/>
            <person name="de Bono B."/>
            <person name="Della Gatta G."/>
            <person name="di Bernardo D."/>
            <person name="Down T."/>
            <person name="Engstrom P."/>
            <person name="Fagiolini M."/>
            <person name="Faulkner G."/>
            <person name="Fletcher C.F."/>
            <person name="Fukushima T."/>
            <person name="Furuno M."/>
            <person name="Futaki S."/>
            <person name="Gariboldi M."/>
            <person name="Georgii-Hemming P."/>
            <person name="Gingeras T.R."/>
            <person name="Gojobori T."/>
            <person name="Green R.E."/>
            <person name="Gustincich S."/>
            <person name="Harbers M."/>
            <person name="Hayashi Y."/>
            <person name="Hensch T.K."/>
            <person name="Hirokawa N."/>
            <person name="Hill D."/>
            <person name="Huminiecki L."/>
            <person name="Iacono M."/>
            <person name="Ikeo K."/>
            <person name="Iwama A."/>
            <person name="Ishikawa T."/>
            <person name="Jakt M."/>
            <person name="Kanapin A."/>
            <person name="Katoh M."/>
            <person name="Kawasawa Y."/>
            <person name="Kelso J."/>
            <person name="Kitamura H."/>
            <person name="Kitano H."/>
            <person name="Kollias G."/>
            <person name="Krishnan S.P."/>
            <person name="Kruger A."/>
            <person name="Kummerfeld S.K."/>
            <person name="Kurochkin I.V."/>
            <person name="Lareau L.F."/>
            <person name="Lazarevic D."/>
            <person name="Lipovich L."/>
            <person name="Liu J."/>
            <person name="Liuni S."/>
            <person name="McWilliam S."/>
            <person name="Madan Babu M."/>
            <person name="Madera M."/>
            <person name="Marchionni L."/>
            <person name="Matsuda H."/>
            <person name="Matsuzawa S."/>
            <person name="Miki H."/>
            <person name="Mignone F."/>
            <person name="Miyake S."/>
            <person name="Morris K."/>
            <person name="Mottagui-Tabar S."/>
            <person name="Mulder N."/>
            <person name="Nakano N."/>
            <person name="Nakauchi H."/>
            <person name="Ng P."/>
            <person name="Nilsson R."/>
            <person name="Nishiguchi S."/>
            <person name="Nishikawa S."/>
            <person name="Nori F."/>
            <person name="Ohara O."/>
            <person name="Okazaki Y."/>
            <person name="Orlando V."/>
            <person name="Pang K.C."/>
            <person name="Pavan W.J."/>
            <person name="Pavesi G."/>
            <person name="Pesole G."/>
            <person name="Petrovsky N."/>
            <person name="Piazza S."/>
            <person name="Reed J."/>
            <person name="Reid J.F."/>
            <person name="Ring B.Z."/>
            <person name="Ringwald M."/>
            <person name="Rost B."/>
            <person name="Ruan Y."/>
            <person name="Salzberg S.L."/>
            <person name="Sandelin A."/>
            <person name="Schneider C."/>
            <person name="Schoenbach C."/>
            <person name="Sekiguchi K."/>
            <person name="Semple C.A."/>
            <person name="Seno S."/>
            <person name="Sessa L."/>
            <person name="Sheng Y."/>
            <person name="Shibata Y."/>
            <person name="Shimada H."/>
            <person name="Shimada K."/>
            <person name="Silva D."/>
            <person name="Sinclair B."/>
            <person name="Sperling S."/>
            <person name="Stupka E."/>
            <person name="Sugiura K."/>
            <person name="Sultana R."/>
            <person name="Takenaka Y."/>
            <person name="Taki K."/>
            <person name="Tammoja K."/>
            <person name="Tan S.L."/>
            <person name="Tang S."/>
            <person name="Taylor M.S."/>
            <person name="Tegner J."/>
            <person name="Teichmann S.A."/>
            <person name="Ueda H.R."/>
            <person name="van Nimwegen E."/>
            <person name="Verardo R."/>
            <person name="Wei C.L."/>
            <person name="Yagi K."/>
            <person name="Yamanishi H."/>
            <person name="Zabarovsky E."/>
            <person name="Zhu S."/>
            <person name="Zimmer A."/>
            <person name="Hide W."/>
            <person name="Bult C."/>
            <person name="Grimmond S.M."/>
            <person name="Teasdale R.D."/>
            <person name="Liu E.T."/>
            <person name="Brusic V."/>
            <person name="Quackenbush J."/>
            <person name="Wahlestedt C."/>
            <person name="Mattick J.S."/>
            <person name="Hume D.A."/>
            <person name="Kai C."/>
            <person name="Sasaki D."/>
            <person name="Tomaru Y."/>
            <person name="Fukuda S."/>
            <person name="Kanamori-Katayama M."/>
            <person name="Suzuki M."/>
            <person name="Aoki J."/>
            <person name="Arakawa T."/>
            <person name="Iida J."/>
            <person name="Imamura K."/>
            <person name="Itoh M."/>
            <person name="Kato T."/>
            <person name="Kawaji H."/>
            <person name="Kawagashira N."/>
            <person name="Kawashima T."/>
            <person name="Kojima M."/>
            <person name="Kondo S."/>
            <person name="Konno H."/>
            <person name="Nakano K."/>
            <person name="Ninomiya N."/>
            <person name="Nishio T."/>
            <person name="Okada M."/>
            <person name="Plessy C."/>
            <person name="Shibata K."/>
            <person name="Shiraki T."/>
            <person name="Suzuki S."/>
            <person name="Tagami M."/>
            <person name="Waki K."/>
            <person name="Watahiki A."/>
            <person name="Okamura-Oho Y."/>
            <person name="Suzuki H."/>
            <person name="Kawai J."/>
            <person name="Hayashizaki Y."/>
        </authorList>
    </citation>
    <scope>NUCLEOTIDE SEQUENCE [LARGE SCALE MRNA]</scope>
    <source>
        <strain>C57BL/6J</strain>
        <tissue>Cerebellum</tissue>
        <tissue>Liver</tissue>
        <tissue>Spinal ganglion</tissue>
    </source>
</reference>
<reference key="2">
    <citation type="journal article" date="2004" name="Genome Res.">
        <title>The status, quality, and expansion of the NIH full-length cDNA project: the Mammalian Gene Collection (MGC).</title>
        <authorList>
            <consortium name="The MGC Project Team"/>
        </authorList>
    </citation>
    <scope>NUCLEOTIDE SEQUENCE [LARGE SCALE MRNA]</scope>
    <source>
        <tissue>Brain</tissue>
    </source>
</reference>
<reference key="3">
    <citation type="journal article" date="2007" name="Proc. Natl. Acad. Sci. U.S.A.">
        <title>Large-scale phosphorylation analysis of mouse liver.</title>
        <authorList>
            <person name="Villen J."/>
            <person name="Beausoleil S.A."/>
            <person name="Gerber S.A."/>
            <person name="Gygi S.P."/>
        </authorList>
    </citation>
    <scope>PHOSPHORYLATION [LARGE SCALE ANALYSIS] AT SER-22 AND SER-23</scope>
    <scope>IDENTIFICATION BY MASS SPECTROMETRY [LARGE SCALE ANALYSIS]</scope>
    <source>
        <tissue>Liver</tissue>
    </source>
</reference>
<reference key="4">
    <citation type="journal article" date="2009" name="Cell">
        <title>A class of dynamin-like GTPases involved in the generation of the tubular ER network.</title>
        <authorList>
            <person name="Hu J."/>
            <person name="Shibata Y."/>
            <person name="Zhu P.-P."/>
            <person name="Voss C."/>
            <person name="Rismanchi N."/>
            <person name="Prinz W.A."/>
            <person name="Rapoport T.A."/>
            <person name="Blackstone C."/>
        </authorList>
    </citation>
    <scope>INTERACTION WITH REEP5 AND RTN3</scope>
</reference>
<reference key="5">
    <citation type="journal article" date="2010" name="Cell">
        <title>A tissue-specific atlas of mouse protein phosphorylation and expression.</title>
        <authorList>
            <person name="Huttlin E.L."/>
            <person name="Jedrychowski M.P."/>
            <person name="Elias J.E."/>
            <person name="Goswami T."/>
            <person name="Rad R."/>
            <person name="Beausoleil S.A."/>
            <person name="Villen J."/>
            <person name="Haas W."/>
            <person name="Sowa M.E."/>
            <person name="Gygi S.P."/>
        </authorList>
    </citation>
    <scope>PHOSPHORYLATION [LARGE SCALE ANALYSIS] AT SER-10; SER-22 AND SER-23</scope>
    <scope>IDENTIFICATION BY MASS SPECTROMETRY [LARGE SCALE ANALYSIS]</scope>
    <source>
        <tissue>Brain</tissue>
        <tissue>Kidney</tissue>
        <tissue>Testis</tissue>
    </source>
</reference>
<reference key="6">
    <citation type="journal article" date="2014" name="J. Biol. Chem.">
        <title>Protrudin regulates endoplasmic reticulum morphology and function associated with the pathogenesis of hereditary spastic paraplegia.</title>
        <authorList>
            <person name="Hashimoto Y."/>
            <person name="Shirane M."/>
            <person name="Matsuzaki F."/>
            <person name="Saita S."/>
            <person name="Ohnishi T."/>
            <person name="Nakayama K.I."/>
        </authorList>
    </citation>
    <scope>SUBCELLULAR LOCATION</scope>
    <scope>INTERACTION WITH ZFYVE27</scope>
</reference>
<comment type="function">
    <text evidence="2 3">Atlastin-1 (ATL1) is a membrane-anchored GTPase that mediates the GTP-dependent fusion of endoplasmic reticulum (ER) membranes, maintaining the continuous ER network. It facilitates the formation of three-way junctions where ER tubules intersect. Two atlastin-1 on neighboring ER tubules bind GTP and form loose homodimers through the GB1/RHD3-type G domains and 3HB regions. Upon GTP hydrolysis, the 3HB regions tighten, pulling the membranes together to drive their fusion. After fusion, the homodimer disassembles upon release of inorganic phosphate (Pi). Subsequently, GDP dissociates, resetting the monomers to a conformation ready for a new fusion cycle. May also regulate more or less directly Golgi biogenesis (By similarity). Indirectly regulates axonal development (By similarity).</text>
</comment>
<comment type="catalytic activity">
    <reaction evidence="3">
        <text>GTP + H2O = GDP + phosphate + H(+)</text>
        <dbReference type="Rhea" id="RHEA:19669"/>
        <dbReference type="ChEBI" id="CHEBI:15377"/>
        <dbReference type="ChEBI" id="CHEBI:15378"/>
        <dbReference type="ChEBI" id="CHEBI:37565"/>
        <dbReference type="ChEBI" id="CHEBI:43474"/>
        <dbReference type="ChEBI" id="CHEBI:58189"/>
    </reaction>
    <physiologicalReaction direction="left-to-right" evidence="3">
        <dbReference type="Rhea" id="RHEA:19670"/>
    </physiologicalReaction>
</comment>
<comment type="subunit">
    <text evidence="2 3 7 8">Monomeric and homodimeric. The homodimer, transiently formed by two molecules on opposing membranes, is the active form mediating ER membrane fusion (By similarity). Interacts with REEP1, REEP5, RTN3 and RTN4 (via the transmembrane region); these proteins are involved in endoplasmic reticulum tubular network organization (PubMed:19665976). Interacts with ZFYVE27; both proteins are involved in endoplasmic reticulum tubular network organization (PubMed:24668814). Interacts with ARL6IP1; both proteins are involved in endoplasmic reticulum tubular network organization (By similarity). Interacts with SPAST; the interaction is direct, could recruit SPAST to Golgi membranes. Interacts (via N-terminal region) with MAP4K4 (via CNH regulatory domain). May interact with TMED2. Interacts with CPT1C (By similarity).</text>
</comment>
<comment type="subcellular location">
    <subcellularLocation>
        <location evidence="8">Endoplasmic reticulum membrane</location>
        <topology evidence="3">Multi-pass membrane protein</topology>
    </subcellularLocation>
    <subcellularLocation>
        <location evidence="3">Golgi apparatus membrane</location>
        <topology evidence="3">Multi-pass membrane protein</topology>
    </subcellularLocation>
    <subcellularLocation>
        <location evidence="2">Cell projection</location>
        <location evidence="2">Axon</location>
    </subcellularLocation>
    <text evidence="8">Localizes to endoplasmic reticulum tubular network.</text>
</comment>
<comment type="domain">
    <text evidence="3">The N-terminal hypervariable region (HVR) regulates ATL1-mediated membrane tethering by organizing ATL1 into a lattice structure on the same membrane. It does not affect GTP hydrolysis or membrane fusion. It has no effect on the GTP hydrolysis and fusion steps.</text>
</comment>
<comment type="domain">
    <text evidence="3">The GB1/RHD3-type G domain mediates GTP-binding and hydrolysis as well as homodimerization.</text>
</comment>
<comment type="domain">
    <text evidence="3">The two three-helix bundle (3HB) regions in the homodimer are loosely associated initially, but they tighten upon GTP hydrolysis, facilitating the fusion of membranes.</text>
</comment>
<comment type="domain">
    <text evidence="3">The C-terminal autoinhibitory domain negatively regulates the GTPase-dependent fusogenic activity without affecting GTP-binding.</text>
</comment>
<comment type="PTM">
    <text evidence="3">Phosphorylated. Phosphorylation, by different kinases, of the N-terminal hypervariable region (HVR) regulates the ATL1-mediated membrane tethering step.</text>
</comment>
<comment type="similarity">
    <text evidence="5">Belongs to the TRAFAC class dynamin-like GTPase superfamily. GB1/RHD3 GTPase family. GB1 subfamily.</text>
</comment>
<feature type="chain" id="PRO_0000190973" description="Atlastin-1">
    <location>
        <begin position="1"/>
        <end position="558"/>
    </location>
</feature>
<feature type="topological domain" description="Cytoplasmic" evidence="3">
    <location>
        <begin position="1"/>
        <end position="449"/>
    </location>
</feature>
<feature type="transmembrane region" description="Helical" evidence="4">
    <location>
        <begin position="450"/>
        <end position="470"/>
    </location>
</feature>
<feature type="topological domain" description="Lumenal" evidence="3">
    <location>
        <position position="471"/>
    </location>
</feature>
<feature type="transmembrane region" description="Helical" evidence="4">
    <location>
        <begin position="472"/>
        <end position="492"/>
    </location>
</feature>
<feature type="topological domain" description="Cytoplasmic" evidence="3">
    <location>
        <begin position="493"/>
        <end position="558"/>
    </location>
</feature>
<feature type="domain" description="GB1/RHD3-type G" evidence="5">
    <location>
        <begin position="64"/>
        <end position="309"/>
    </location>
</feature>
<feature type="region of interest" description="N-terminal hypervariable region (HVR)" evidence="3">
    <location>
        <begin position="1"/>
        <end position="34"/>
    </location>
</feature>
<feature type="region of interest" description="Disordered" evidence="6">
    <location>
        <begin position="1"/>
        <end position="28"/>
    </location>
</feature>
<feature type="region of interest" description="3HB (three-helix bundle) domain" evidence="3">
    <location>
        <begin position="347"/>
        <end position="438"/>
    </location>
</feature>
<feature type="region of interest" description="Linker" evidence="3">
    <location>
        <begin position="439"/>
        <end position="447"/>
    </location>
</feature>
<feature type="region of interest" description="Autoinhibitory domain" evidence="3">
    <location>
        <begin position="521"/>
        <end position="558"/>
    </location>
</feature>
<feature type="coiled-coil region" evidence="4">
    <location>
        <begin position="412"/>
        <end position="439"/>
    </location>
</feature>
<feature type="binding site" evidence="3">
    <location>
        <position position="77"/>
    </location>
    <ligand>
        <name>GDP</name>
        <dbReference type="ChEBI" id="CHEBI:58189"/>
    </ligand>
</feature>
<feature type="binding site" evidence="3">
    <location>
        <position position="77"/>
    </location>
    <ligand>
        <name>GTP</name>
        <dbReference type="ChEBI" id="CHEBI:37565"/>
    </ligand>
</feature>
<feature type="binding site" evidence="3">
    <location>
        <position position="78"/>
    </location>
    <ligand>
        <name>GDP</name>
        <dbReference type="ChEBI" id="CHEBI:58189"/>
    </ligand>
</feature>
<feature type="binding site" evidence="3">
    <location>
        <position position="78"/>
    </location>
    <ligand>
        <name>GTP</name>
        <dbReference type="ChEBI" id="CHEBI:37565"/>
    </ligand>
</feature>
<feature type="binding site" evidence="3">
    <location>
        <position position="79"/>
    </location>
    <ligand>
        <name>GDP</name>
        <dbReference type="ChEBI" id="CHEBI:58189"/>
    </ligand>
</feature>
<feature type="binding site" evidence="3">
    <location>
        <position position="79"/>
    </location>
    <ligand>
        <name>GTP</name>
        <dbReference type="ChEBI" id="CHEBI:37565"/>
    </ligand>
</feature>
<feature type="binding site" evidence="3">
    <location>
        <position position="80"/>
    </location>
    <ligand>
        <name>GDP</name>
        <dbReference type="ChEBI" id="CHEBI:58189"/>
    </ligand>
</feature>
<feature type="binding site" evidence="3">
    <location>
        <position position="80"/>
    </location>
    <ligand>
        <name>GTP</name>
        <dbReference type="ChEBI" id="CHEBI:37565"/>
    </ligand>
</feature>
<feature type="binding site" evidence="3">
    <location>
        <position position="81"/>
    </location>
    <ligand>
        <name>GDP</name>
        <dbReference type="ChEBI" id="CHEBI:58189"/>
    </ligand>
</feature>
<feature type="binding site" evidence="3">
    <location>
        <position position="81"/>
    </location>
    <ligand>
        <name>GTP</name>
        <dbReference type="ChEBI" id="CHEBI:37565"/>
    </ligand>
</feature>
<feature type="binding site" evidence="3">
    <location>
        <position position="81"/>
    </location>
    <ligand>
        <name>Mg(2+)</name>
        <dbReference type="ChEBI" id="CHEBI:18420"/>
    </ligand>
</feature>
<feature type="binding site" evidence="3">
    <location>
        <position position="82"/>
    </location>
    <ligand>
        <name>GDP</name>
        <dbReference type="ChEBI" id="CHEBI:58189"/>
    </ligand>
</feature>
<feature type="binding site" evidence="3">
    <location>
        <position position="82"/>
    </location>
    <ligand>
        <name>GTP</name>
        <dbReference type="ChEBI" id="CHEBI:37565"/>
    </ligand>
</feature>
<feature type="binding site" evidence="3">
    <location>
        <position position="148"/>
    </location>
    <ligand>
        <name>GDP</name>
        <dbReference type="ChEBI" id="CHEBI:58189"/>
    </ligand>
</feature>
<feature type="binding site" evidence="3">
    <location>
        <position position="217"/>
    </location>
    <ligand>
        <name>GDP</name>
        <dbReference type="ChEBI" id="CHEBI:58189"/>
    </ligand>
</feature>
<feature type="binding site" evidence="3">
    <location>
        <position position="217"/>
    </location>
    <ligand>
        <name>GTP</name>
        <dbReference type="ChEBI" id="CHEBI:37565"/>
    </ligand>
</feature>
<feature type="binding site" evidence="3">
    <location>
        <position position="218"/>
    </location>
    <ligand>
        <name>GDP</name>
        <dbReference type="ChEBI" id="CHEBI:58189"/>
    </ligand>
</feature>
<feature type="binding site" evidence="3">
    <location>
        <position position="218"/>
    </location>
    <ligand>
        <name>GTP</name>
        <dbReference type="ChEBI" id="CHEBI:37565"/>
    </ligand>
</feature>
<feature type="binding site" evidence="3">
    <location>
        <position position="276"/>
    </location>
    <ligand>
        <name>GDP</name>
        <dbReference type="ChEBI" id="CHEBI:58189"/>
    </ligand>
</feature>
<feature type="binding site" evidence="3">
    <location>
        <position position="276"/>
    </location>
    <ligand>
        <name>GTP</name>
        <dbReference type="ChEBI" id="CHEBI:37565"/>
    </ligand>
</feature>
<feature type="binding site" evidence="3">
    <location>
        <position position="279"/>
    </location>
    <ligand>
        <name>GDP</name>
        <dbReference type="ChEBI" id="CHEBI:58189"/>
    </ligand>
</feature>
<feature type="modified residue" description="Phosphoserine" evidence="13">
    <location>
        <position position="10"/>
    </location>
</feature>
<feature type="modified residue" description="Phosphoserine" evidence="12 13">
    <location>
        <position position="22"/>
    </location>
</feature>
<feature type="modified residue" description="Phosphoserine" evidence="12 13">
    <location>
        <position position="23"/>
    </location>
</feature>
<feature type="modified residue" description="N6-acetyllysine" evidence="1">
    <location>
        <position position="395"/>
    </location>
</feature>
<gene>
    <name evidence="11" type="primary">Atl1</name>
    <name evidence="9" type="synonym">Spg3a</name>
</gene>
<accession>Q8BH66</accession>
<accession>Q8BJH5</accession>